<dbReference type="EMBL" id="BC091537">
    <property type="protein sequence ID" value="AAH91537.1"/>
    <property type="status" value="ALT_SEQ"/>
    <property type="molecule type" value="mRNA"/>
</dbReference>
<dbReference type="EMBL" id="BC107616">
    <property type="protein sequence ID" value="AAI07617.1"/>
    <property type="molecule type" value="mRNA"/>
</dbReference>
<dbReference type="RefSeq" id="NP_001032761.1">
    <property type="nucleotide sequence ID" value="NM_001037672.2"/>
</dbReference>
<dbReference type="FunCoup" id="Q3B7G7">
    <property type="interactions" value="60"/>
</dbReference>
<dbReference type="STRING" id="7955.ENSDARP00000064211"/>
<dbReference type="PaxDb" id="7955-ENSDARP00000064211"/>
<dbReference type="Ensembl" id="ENSDART00000064212">
    <property type="protein sequence ID" value="ENSDARP00000064211"/>
    <property type="gene ID" value="ENSDARG00000043728"/>
</dbReference>
<dbReference type="GeneID" id="553315"/>
<dbReference type="KEGG" id="dre:553315"/>
<dbReference type="AGR" id="ZFIN:ZDB-GENE-051030-24"/>
<dbReference type="CTD" id="285672"/>
<dbReference type="ZFIN" id="ZDB-GENE-051030-24">
    <property type="gene designation" value="srek1ip1"/>
</dbReference>
<dbReference type="eggNOG" id="KOG2985">
    <property type="taxonomic scope" value="Eukaryota"/>
</dbReference>
<dbReference type="HOGENOM" id="CLU_122662_0_0_1"/>
<dbReference type="InParanoid" id="Q3B7G7"/>
<dbReference type="OMA" id="KHHKKRQ"/>
<dbReference type="OrthoDB" id="5596742at2759"/>
<dbReference type="TreeFam" id="TF318225"/>
<dbReference type="PRO" id="PR:Q3B7G7"/>
<dbReference type="Proteomes" id="UP000000437">
    <property type="component" value="Chromosome 10"/>
</dbReference>
<dbReference type="Bgee" id="ENSDARG00000043728">
    <property type="expression patterns" value="Expressed in gastrula and 21 other cell types or tissues"/>
</dbReference>
<dbReference type="GO" id="GO:0003676">
    <property type="term" value="F:nucleic acid binding"/>
    <property type="evidence" value="ECO:0007669"/>
    <property type="project" value="InterPro"/>
</dbReference>
<dbReference type="GO" id="GO:0008270">
    <property type="term" value="F:zinc ion binding"/>
    <property type="evidence" value="ECO:0007669"/>
    <property type="project" value="UniProtKB-KW"/>
</dbReference>
<dbReference type="GO" id="GO:0006397">
    <property type="term" value="P:mRNA processing"/>
    <property type="evidence" value="ECO:0007669"/>
    <property type="project" value="UniProtKB-KW"/>
</dbReference>
<dbReference type="GO" id="GO:0008380">
    <property type="term" value="P:RNA splicing"/>
    <property type="evidence" value="ECO:0007669"/>
    <property type="project" value="UniProtKB-KW"/>
</dbReference>
<dbReference type="InterPro" id="IPR001878">
    <property type="entry name" value="Znf_CCHC"/>
</dbReference>
<dbReference type="PANTHER" id="PTHR31437:SF1">
    <property type="entry name" value="PROTEIN SREK1IP1"/>
    <property type="match status" value="1"/>
</dbReference>
<dbReference type="PANTHER" id="PTHR31437">
    <property type="entry name" value="SREK1IP1 FAMILY MEMBER"/>
    <property type="match status" value="1"/>
</dbReference>
<dbReference type="Pfam" id="PF13917">
    <property type="entry name" value="zf-CCHC_3"/>
    <property type="match status" value="1"/>
</dbReference>
<dbReference type="PROSITE" id="PS50158">
    <property type="entry name" value="ZF_CCHC"/>
    <property type="match status" value="1"/>
</dbReference>
<protein>
    <recommendedName>
        <fullName>Protein SREK1IP1</fullName>
    </recommendedName>
</protein>
<reference key="1">
    <citation type="submission" date="2005-10" db="EMBL/GenBank/DDBJ databases">
        <authorList>
            <consortium name="NIH - Zebrafish Gene Collection (ZGC) project"/>
        </authorList>
    </citation>
    <scope>NUCLEOTIDE SEQUENCE [LARGE SCALE MRNA]</scope>
    <source>
        <tissue>Larva</tissue>
    </source>
</reference>
<comment type="function">
    <text evidence="1">Possible splicing regulator involved in the control of cellular survival.</text>
</comment>
<comment type="sequence caution" evidence="4">
    <conflict type="miscellaneous discrepancy">
        <sequence resource="EMBL-CDS" id="AAH91537"/>
    </conflict>
    <text>Contaminating sequence. Potential poly-A sequence.</text>
</comment>
<accession>Q3B7G7</accession>
<accession>Q5BJC5</accession>
<proteinExistence type="evidence at transcript level"/>
<organism>
    <name type="scientific">Danio rerio</name>
    <name type="common">Zebrafish</name>
    <name type="synonym">Brachydanio rerio</name>
    <dbReference type="NCBI Taxonomy" id="7955"/>
    <lineage>
        <taxon>Eukaryota</taxon>
        <taxon>Metazoa</taxon>
        <taxon>Chordata</taxon>
        <taxon>Craniata</taxon>
        <taxon>Vertebrata</taxon>
        <taxon>Euteleostomi</taxon>
        <taxon>Actinopterygii</taxon>
        <taxon>Neopterygii</taxon>
        <taxon>Teleostei</taxon>
        <taxon>Ostariophysi</taxon>
        <taxon>Cypriniformes</taxon>
        <taxon>Danionidae</taxon>
        <taxon>Danioninae</taxon>
        <taxon>Danio</taxon>
    </lineage>
</organism>
<evidence type="ECO:0000250" key="1"/>
<evidence type="ECO:0000255" key="2">
    <source>
        <dbReference type="PROSITE-ProRule" id="PRU00047"/>
    </source>
</evidence>
<evidence type="ECO:0000256" key="3">
    <source>
        <dbReference type="SAM" id="MobiDB-lite"/>
    </source>
</evidence>
<evidence type="ECO:0000305" key="4"/>
<gene>
    <name type="primary">srek1ip1</name>
    <name type="synonym">sfrs12ip1</name>
    <name type="ORF">zgc:123019</name>
</gene>
<keyword id="KW-0479">Metal-binding</keyword>
<keyword id="KW-0507">mRNA processing</keyword>
<keyword id="KW-0508">mRNA splicing</keyword>
<keyword id="KW-1185">Reference proteome</keyword>
<keyword id="KW-0862">Zinc</keyword>
<keyword id="KW-0863">Zinc-finger</keyword>
<sequence length="158" mass="18130">MAAPGPNKDNIRAGCKRCGYPGHLTFECRNFLRVDPRKDIVLDVSSTSTEESDEEEQEALSKEKIFGSHSKGSQEDSRKEKHKKKSKERSRGKAKKRSYSSSDEEEDEMSKKKKKRKSNKKKGKKEKREKERKHKKKQKKKDTESSSSDSSSESSDTD</sequence>
<name>SR1IP_DANRE</name>
<feature type="chain" id="PRO_0000311925" description="Protein SREK1IP1">
    <location>
        <begin position="1"/>
        <end position="158"/>
    </location>
</feature>
<feature type="zinc finger region" description="CCHC-type" evidence="2">
    <location>
        <begin position="13"/>
        <end position="30"/>
    </location>
</feature>
<feature type="region of interest" description="Disordered" evidence="3">
    <location>
        <begin position="1"/>
        <end position="20"/>
    </location>
</feature>
<feature type="region of interest" description="Disordered" evidence="3">
    <location>
        <begin position="45"/>
        <end position="158"/>
    </location>
</feature>
<feature type="compositionally biased region" description="Basic and acidic residues" evidence="3">
    <location>
        <begin position="59"/>
        <end position="79"/>
    </location>
</feature>
<feature type="compositionally biased region" description="Basic residues" evidence="3">
    <location>
        <begin position="80"/>
        <end position="98"/>
    </location>
</feature>
<feature type="compositionally biased region" description="Basic residues" evidence="3">
    <location>
        <begin position="111"/>
        <end position="140"/>
    </location>
</feature>
<feature type="compositionally biased region" description="Low complexity" evidence="3">
    <location>
        <begin position="145"/>
        <end position="158"/>
    </location>
</feature>
<feature type="sequence conflict" description="In Ref. 1; AAH91537." evidence="4" ref="1">
    <original>D</original>
    <variation>G</variation>
    <location>
        <position position="9"/>
    </location>
</feature>
<feature type="sequence conflict" description="In Ref. 1; AAH91537." evidence="4" ref="1">
    <original>S</original>
    <variation>G</variation>
    <location>
        <position position="46"/>
    </location>
</feature>
<feature type="sequence conflict" description="In Ref. 1; AAH91537." evidence="4" ref="1">
    <original>G</original>
    <variation>K</variation>
    <location>
        <position position="123"/>
    </location>
</feature>